<organism>
    <name type="scientific">Neisseria meningitidis serogroup C / serotype 2a (strain ATCC 700532 / DSM 15464 / FAM18)</name>
    <dbReference type="NCBI Taxonomy" id="272831"/>
    <lineage>
        <taxon>Bacteria</taxon>
        <taxon>Pseudomonadati</taxon>
        <taxon>Pseudomonadota</taxon>
        <taxon>Betaproteobacteria</taxon>
        <taxon>Neisseriales</taxon>
        <taxon>Neisseriaceae</taxon>
        <taxon>Neisseria</taxon>
    </lineage>
</organism>
<comment type="function">
    <text evidence="1">Involved in the biosynthesis of branched-chain amino acids (BCAA). Catalyzes an alkyl-migration followed by a ketol-acid reduction of (S)-2-acetolactate (S2AL) to yield (R)-2,3-dihydroxy-isovalerate. In the isomerase reaction, S2AL is rearranged via a Mg-dependent methyl migration to produce 3-hydroxy-3-methyl-2-ketobutyrate (HMKB). In the reductase reaction, this 2-ketoacid undergoes a metal-dependent reduction by NADPH to yield (R)-2,3-dihydroxy-isovalerate.</text>
</comment>
<comment type="catalytic activity">
    <reaction evidence="1">
        <text>(2R)-2,3-dihydroxy-3-methylbutanoate + NADP(+) = (2S)-2-acetolactate + NADPH + H(+)</text>
        <dbReference type="Rhea" id="RHEA:22068"/>
        <dbReference type="ChEBI" id="CHEBI:15378"/>
        <dbReference type="ChEBI" id="CHEBI:49072"/>
        <dbReference type="ChEBI" id="CHEBI:57783"/>
        <dbReference type="ChEBI" id="CHEBI:58349"/>
        <dbReference type="ChEBI" id="CHEBI:58476"/>
        <dbReference type="EC" id="1.1.1.86"/>
    </reaction>
</comment>
<comment type="catalytic activity">
    <reaction evidence="1">
        <text>(2R,3R)-2,3-dihydroxy-3-methylpentanoate + NADP(+) = (S)-2-ethyl-2-hydroxy-3-oxobutanoate + NADPH + H(+)</text>
        <dbReference type="Rhea" id="RHEA:13493"/>
        <dbReference type="ChEBI" id="CHEBI:15378"/>
        <dbReference type="ChEBI" id="CHEBI:49256"/>
        <dbReference type="ChEBI" id="CHEBI:49258"/>
        <dbReference type="ChEBI" id="CHEBI:57783"/>
        <dbReference type="ChEBI" id="CHEBI:58349"/>
        <dbReference type="EC" id="1.1.1.86"/>
    </reaction>
</comment>
<comment type="cofactor">
    <cofactor evidence="1">
        <name>Mg(2+)</name>
        <dbReference type="ChEBI" id="CHEBI:18420"/>
    </cofactor>
    <text evidence="1">Binds 2 magnesium ions per subunit.</text>
</comment>
<comment type="pathway">
    <text evidence="1">Amino-acid biosynthesis; L-isoleucine biosynthesis; L-isoleucine from 2-oxobutanoate: step 2/4.</text>
</comment>
<comment type="pathway">
    <text evidence="1">Amino-acid biosynthesis; L-valine biosynthesis; L-valine from pyruvate: step 2/4.</text>
</comment>
<comment type="similarity">
    <text evidence="1">Belongs to the ketol-acid reductoisomerase family.</text>
</comment>
<sequence>MQVYYDKDADLSLIKGKTVAIIGYGSQGHAHAANLKDSGVNVVIGLRQGSSWKKAEAAGHVVKTVAEATKEADVVMLLLPDETMPAVYHAEVTANLKEGATLAFAHGFNVHYNQIVPRADLDVIMVAPKGPGHTVRSEYKRGGGVPSLIAVYQDNSGKAKDIALSYAAANGGTKGGVIETTFREETETDLFGEQAVLCGGVVELIKAGFETLTEAGYAPEMAYFECLHEMKLIVDLIFEGGIANMNYSISNNAEYGEYVTGPEVVNASSKEAMRNALKRIQTGEYAKMFIQEGNVNYASMTARRRLNADHQVEKVGAQLRAMMPWITANKLVDQDKN</sequence>
<accession>A1KUZ8</accession>
<feature type="chain" id="PRO_1000050546" description="Ketol-acid reductoisomerase (NADP(+))">
    <location>
        <begin position="1"/>
        <end position="337"/>
    </location>
</feature>
<feature type="domain" description="KARI N-terminal Rossmann" evidence="2">
    <location>
        <begin position="1"/>
        <end position="180"/>
    </location>
</feature>
<feature type="domain" description="KARI C-terminal knotted" evidence="3">
    <location>
        <begin position="181"/>
        <end position="326"/>
    </location>
</feature>
<feature type="active site" evidence="1">
    <location>
        <position position="106"/>
    </location>
</feature>
<feature type="binding site" evidence="1">
    <location>
        <begin position="24"/>
        <end position="27"/>
    </location>
    <ligand>
        <name>NADP(+)</name>
        <dbReference type="ChEBI" id="CHEBI:58349"/>
    </ligand>
</feature>
<feature type="binding site" evidence="1">
    <location>
        <position position="47"/>
    </location>
    <ligand>
        <name>NADP(+)</name>
        <dbReference type="ChEBI" id="CHEBI:58349"/>
    </ligand>
</feature>
<feature type="binding site" evidence="1">
    <location>
        <position position="51"/>
    </location>
    <ligand>
        <name>NADP(+)</name>
        <dbReference type="ChEBI" id="CHEBI:58349"/>
    </ligand>
</feature>
<feature type="binding site" evidence="1">
    <location>
        <position position="132"/>
    </location>
    <ligand>
        <name>NADP(+)</name>
        <dbReference type="ChEBI" id="CHEBI:58349"/>
    </ligand>
</feature>
<feature type="binding site" evidence="1">
    <location>
        <position position="189"/>
    </location>
    <ligand>
        <name>Mg(2+)</name>
        <dbReference type="ChEBI" id="CHEBI:18420"/>
        <label>1</label>
    </ligand>
</feature>
<feature type="binding site" evidence="1">
    <location>
        <position position="189"/>
    </location>
    <ligand>
        <name>Mg(2+)</name>
        <dbReference type="ChEBI" id="CHEBI:18420"/>
        <label>2</label>
    </ligand>
</feature>
<feature type="binding site" evidence="1">
    <location>
        <position position="193"/>
    </location>
    <ligand>
        <name>Mg(2+)</name>
        <dbReference type="ChEBI" id="CHEBI:18420"/>
        <label>1</label>
    </ligand>
</feature>
<feature type="binding site" evidence="1">
    <location>
        <position position="225"/>
    </location>
    <ligand>
        <name>Mg(2+)</name>
        <dbReference type="ChEBI" id="CHEBI:18420"/>
        <label>2</label>
    </ligand>
</feature>
<feature type="binding site" evidence="1">
    <location>
        <position position="229"/>
    </location>
    <ligand>
        <name>Mg(2+)</name>
        <dbReference type="ChEBI" id="CHEBI:18420"/>
        <label>2</label>
    </ligand>
</feature>
<feature type="binding site" evidence="1">
    <location>
        <position position="250"/>
    </location>
    <ligand>
        <name>substrate</name>
    </ligand>
</feature>
<reference key="1">
    <citation type="journal article" date="2007" name="PLoS Genet.">
        <title>Meningococcal genetic variation mechanisms viewed through comparative analysis of serogroup C strain FAM18.</title>
        <authorList>
            <person name="Bentley S.D."/>
            <person name="Vernikos G.S."/>
            <person name="Snyder L.A.S."/>
            <person name="Churcher C."/>
            <person name="Arrowsmith C."/>
            <person name="Chillingworth T."/>
            <person name="Cronin A."/>
            <person name="Davis P.H."/>
            <person name="Holroyd N.E."/>
            <person name="Jagels K."/>
            <person name="Maddison M."/>
            <person name="Moule S."/>
            <person name="Rabbinowitsch E."/>
            <person name="Sharp S."/>
            <person name="Unwin L."/>
            <person name="Whitehead S."/>
            <person name="Quail M.A."/>
            <person name="Achtman M."/>
            <person name="Barrell B.G."/>
            <person name="Saunders N.J."/>
            <person name="Parkhill J."/>
        </authorList>
    </citation>
    <scope>NUCLEOTIDE SEQUENCE [LARGE SCALE GENOMIC DNA]</scope>
    <source>
        <strain>ATCC 700532 / DSM 15464 / FAM18</strain>
    </source>
</reference>
<name>ILVC_NEIMF</name>
<proteinExistence type="inferred from homology"/>
<gene>
    <name evidence="1" type="primary">ilvC</name>
    <name type="ordered locus">NMC1494</name>
</gene>
<protein>
    <recommendedName>
        <fullName evidence="1">Ketol-acid reductoisomerase (NADP(+))</fullName>
        <shortName evidence="1">KARI</shortName>
        <ecNumber evidence="1">1.1.1.86</ecNumber>
    </recommendedName>
    <alternativeName>
        <fullName evidence="1">Acetohydroxy-acid isomeroreductase</fullName>
        <shortName evidence="1">AHIR</shortName>
    </alternativeName>
    <alternativeName>
        <fullName evidence="1">Alpha-keto-beta-hydroxylacyl reductoisomerase</fullName>
    </alternativeName>
    <alternativeName>
        <fullName evidence="1">Ketol-acid reductoisomerase type 1</fullName>
    </alternativeName>
    <alternativeName>
        <fullName evidence="1">Ketol-acid reductoisomerase type I</fullName>
    </alternativeName>
</protein>
<dbReference type="EC" id="1.1.1.86" evidence="1"/>
<dbReference type="EMBL" id="AM421808">
    <property type="protein sequence ID" value="CAM10697.1"/>
    <property type="molecule type" value="Genomic_DNA"/>
</dbReference>
<dbReference type="RefSeq" id="WP_002218988.1">
    <property type="nucleotide sequence ID" value="NC_008767.1"/>
</dbReference>
<dbReference type="SMR" id="A1KUZ8"/>
<dbReference type="KEGG" id="nmc:NMC1494"/>
<dbReference type="HOGENOM" id="CLU_033821_0_1_4"/>
<dbReference type="UniPathway" id="UPA00047">
    <property type="reaction ID" value="UER00056"/>
</dbReference>
<dbReference type="UniPathway" id="UPA00049">
    <property type="reaction ID" value="UER00060"/>
</dbReference>
<dbReference type="Proteomes" id="UP000002286">
    <property type="component" value="Chromosome"/>
</dbReference>
<dbReference type="GO" id="GO:0005829">
    <property type="term" value="C:cytosol"/>
    <property type="evidence" value="ECO:0007669"/>
    <property type="project" value="TreeGrafter"/>
</dbReference>
<dbReference type="GO" id="GO:0004455">
    <property type="term" value="F:ketol-acid reductoisomerase activity"/>
    <property type="evidence" value="ECO:0007669"/>
    <property type="project" value="UniProtKB-UniRule"/>
</dbReference>
<dbReference type="GO" id="GO:0000287">
    <property type="term" value="F:magnesium ion binding"/>
    <property type="evidence" value="ECO:0007669"/>
    <property type="project" value="UniProtKB-UniRule"/>
</dbReference>
<dbReference type="GO" id="GO:0050661">
    <property type="term" value="F:NADP binding"/>
    <property type="evidence" value="ECO:0007669"/>
    <property type="project" value="InterPro"/>
</dbReference>
<dbReference type="GO" id="GO:0009097">
    <property type="term" value="P:isoleucine biosynthetic process"/>
    <property type="evidence" value="ECO:0007669"/>
    <property type="project" value="UniProtKB-UniRule"/>
</dbReference>
<dbReference type="GO" id="GO:0009099">
    <property type="term" value="P:L-valine biosynthetic process"/>
    <property type="evidence" value="ECO:0007669"/>
    <property type="project" value="UniProtKB-UniRule"/>
</dbReference>
<dbReference type="FunFam" id="3.40.50.720:FF:000023">
    <property type="entry name" value="Ketol-acid reductoisomerase (NADP(+))"/>
    <property type="match status" value="1"/>
</dbReference>
<dbReference type="Gene3D" id="6.10.240.10">
    <property type="match status" value="1"/>
</dbReference>
<dbReference type="Gene3D" id="3.40.50.720">
    <property type="entry name" value="NAD(P)-binding Rossmann-like Domain"/>
    <property type="match status" value="1"/>
</dbReference>
<dbReference type="HAMAP" id="MF_00435">
    <property type="entry name" value="IlvC"/>
    <property type="match status" value="1"/>
</dbReference>
<dbReference type="InterPro" id="IPR008927">
    <property type="entry name" value="6-PGluconate_DH-like_C_sf"/>
</dbReference>
<dbReference type="InterPro" id="IPR013023">
    <property type="entry name" value="KARI"/>
</dbReference>
<dbReference type="InterPro" id="IPR000506">
    <property type="entry name" value="KARI_C"/>
</dbReference>
<dbReference type="InterPro" id="IPR013116">
    <property type="entry name" value="KARI_N"/>
</dbReference>
<dbReference type="InterPro" id="IPR014359">
    <property type="entry name" value="KARI_prok"/>
</dbReference>
<dbReference type="InterPro" id="IPR036291">
    <property type="entry name" value="NAD(P)-bd_dom_sf"/>
</dbReference>
<dbReference type="NCBIfam" id="TIGR00465">
    <property type="entry name" value="ilvC"/>
    <property type="match status" value="1"/>
</dbReference>
<dbReference type="NCBIfam" id="NF004017">
    <property type="entry name" value="PRK05479.1"/>
    <property type="match status" value="1"/>
</dbReference>
<dbReference type="NCBIfam" id="NF009940">
    <property type="entry name" value="PRK13403.1"/>
    <property type="match status" value="1"/>
</dbReference>
<dbReference type="PANTHER" id="PTHR21371">
    <property type="entry name" value="KETOL-ACID REDUCTOISOMERASE, MITOCHONDRIAL"/>
    <property type="match status" value="1"/>
</dbReference>
<dbReference type="PANTHER" id="PTHR21371:SF1">
    <property type="entry name" value="KETOL-ACID REDUCTOISOMERASE, MITOCHONDRIAL"/>
    <property type="match status" value="1"/>
</dbReference>
<dbReference type="Pfam" id="PF01450">
    <property type="entry name" value="KARI_C"/>
    <property type="match status" value="1"/>
</dbReference>
<dbReference type="Pfam" id="PF07991">
    <property type="entry name" value="KARI_N"/>
    <property type="match status" value="1"/>
</dbReference>
<dbReference type="PIRSF" id="PIRSF000116">
    <property type="entry name" value="IlvC_gammaproteo"/>
    <property type="match status" value="1"/>
</dbReference>
<dbReference type="SUPFAM" id="SSF48179">
    <property type="entry name" value="6-phosphogluconate dehydrogenase C-terminal domain-like"/>
    <property type="match status" value="1"/>
</dbReference>
<dbReference type="SUPFAM" id="SSF51735">
    <property type="entry name" value="NAD(P)-binding Rossmann-fold domains"/>
    <property type="match status" value="1"/>
</dbReference>
<dbReference type="PROSITE" id="PS51851">
    <property type="entry name" value="KARI_C"/>
    <property type="match status" value="1"/>
</dbReference>
<dbReference type="PROSITE" id="PS51850">
    <property type="entry name" value="KARI_N"/>
    <property type="match status" value="1"/>
</dbReference>
<keyword id="KW-0028">Amino-acid biosynthesis</keyword>
<keyword id="KW-0100">Branched-chain amino acid biosynthesis</keyword>
<keyword id="KW-0460">Magnesium</keyword>
<keyword id="KW-0479">Metal-binding</keyword>
<keyword id="KW-0521">NADP</keyword>
<keyword id="KW-0560">Oxidoreductase</keyword>
<evidence type="ECO:0000255" key="1">
    <source>
        <dbReference type="HAMAP-Rule" id="MF_00435"/>
    </source>
</evidence>
<evidence type="ECO:0000255" key="2">
    <source>
        <dbReference type="PROSITE-ProRule" id="PRU01197"/>
    </source>
</evidence>
<evidence type="ECO:0000255" key="3">
    <source>
        <dbReference type="PROSITE-ProRule" id="PRU01198"/>
    </source>
</evidence>